<dbReference type="EMBL" id="PVJY020000258">
    <property type="status" value="NOT_ANNOTATED_CDS"/>
    <property type="molecule type" value="Genomic_DNA"/>
</dbReference>
<dbReference type="SMR" id="P0DUI9"/>
<dbReference type="GO" id="GO:0042627">
    <property type="term" value="C:chylomicron"/>
    <property type="evidence" value="ECO:0007669"/>
    <property type="project" value="UniProtKB-KW"/>
</dbReference>
<dbReference type="GO" id="GO:0070062">
    <property type="term" value="C:extracellular exosome"/>
    <property type="evidence" value="ECO:0000250"/>
    <property type="project" value="UniProtKB"/>
</dbReference>
<dbReference type="GO" id="GO:0034364">
    <property type="term" value="C:high-density lipoprotein particle"/>
    <property type="evidence" value="ECO:0007669"/>
    <property type="project" value="UniProtKB-KW"/>
</dbReference>
<dbReference type="GO" id="GO:0034362">
    <property type="term" value="C:low-density lipoprotein particle"/>
    <property type="evidence" value="ECO:0007669"/>
    <property type="project" value="TreeGrafter"/>
</dbReference>
<dbReference type="GO" id="GO:0097487">
    <property type="term" value="C:multivesicular body, internal vesicle"/>
    <property type="evidence" value="ECO:0000250"/>
    <property type="project" value="UniProtKB"/>
</dbReference>
<dbReference type="GO" id="GO:0034361">
    <property type="term" value="C:very-low-density lipoprotein particle"/>
    <property type="evidence" value="ECO:0007669"/>
    <property type="project" value="UniProtKB-KW"/>
</dbReference>
<dbReference type="GO" id="GO:0120020">
    <property type="term" value="F:cholesterol transfer activity"/>
    <property type="evidence" value="ECO:0007669"/>
    <property type="project" value="TreeGrafter"/>
</dbReference>
<dbReference type="GO" id="GO:0008201">
    <property type="term" value="F:heparin binding"/>
    <property type="evidence" value="ECO:0007669"/>
    <property type="project" value="UniProtKB-KW"/>
</dbReference>
<dbReference type="GO" id="GO:0060228">
    <property type="term" value="F:phosphatidylcholine-sterol O-acyltransferase activator activity"/>
    <property type="evidence" value="ECO:0007669"/>
    <property type="project" value="TreeGrafter"/>
</dbReference>
<dbReference type="GO" id="GO:0005543">
    <property type="term" value="F:phospholipid binding"/>
    <property type="evidence" value="ECO:0007669"/>
    <property type="project" value="TreeGrafter"/>
</dbReference>
<dbReference type="GO" id="GO:0055090">
    <property type="term" value="P:acylglycerol homeostasis"/>
    <property type="evidence" value="ECO:0007669"/>
    <property type="project" value="TreeGrafter"/>
</dbReference>
<dbReference type="GO" id="GO:0033344">
    <property type="term" value="P:cholesterol efflux"/>
    <property type="evidence" value="ECO:0007669"/>
    <property type="project" value="TreeGrafter"/>
</dbReference>
<dbReference type="GO" id="GO:0008203">
    <property type="term" value="P:cholesterol metabolic process"/>
    <property type="evidence" value="ECO:0007669"/>
    <property type="project" value="TreeGrafter"/>
</dbReference>
<dbReference type="GO" id="GO:0042157">
    <property type="term" value="P:lipoprotein metabolic process"/>
    <property type="evidence" value="ECO:0007669"/>
    <property type="project" value="InterPro"/>
</dbReference>
<dbReference type="GO" id="GO:0032438">
    <property type="term" value="P:melanosome organization"/>
    <property type="evidence" value="ECO:0000250"/>
    <property type="project" value="UniProtKB"/>
</dbReference>
<dbReference type="GO" id="GO:0033700">
    <property type="term" value="P:phospholipid efflux"/>
    <property type="evidence" value="ECO:0007669"/>
    <property type="project" value="TreeGrafter"/>
</dbReference>
<dbReference type="FunFam" id="1.20.120.20:FF:000002">
    <property type="entry name" value="Apolipoprotein E"/>
    <property type="match status" value="1"/>
</dbReference>
<dbReference type="FunFam" id="1.20.120.20:FF:000003">
    <property type="entry name" value="Apolipoprotein E"/>
    <property type="match status" value="1"/>
</dbReference>
<dbReference type="Gene3D" id="1.20.120.20">
    <property type="entry name" value="Apolipoprotein"/>
    <property type="match status" value="2"/>
</dbReference>
<dbReference type="InterPro" id="IPR000074">
    <property type="entry name" value="ApoA_E"/>
</dbReference>
<dbReference type="InterPro" id="IPR050163">
    <property type="entry name" value="Apolipoprotein_A1/A4/E"/>
</dbReference>
<dbReference type="PANTHER" id="PTHR18976">
    <property type="entry name" value="APOLIPOPROTEIN"/>
    <property type="match status" value="1"/>
</dbReference>
<dbReference type="PANTHER" id="PTHR18976:SF2">
    <property type="entry name" value="APOLIPOPROTEIN E"/>
    <property type="match status" value="1"/>
</dbReference>
<dbReference type="Pfam" id="PF01442">
    <property type="entry name" value="Apolipoprotein"/>
    <property type="match status" value="1"/>
</dbReference>
<dbReference type="SUPFAM" id="SSF58113">
    <property type="entry name" value="Apolipoprotein A-I"/>
    <property type="match status" value="1"/>
</dbReference>
<keyword id="KW-0162">Chylomicron</keyword>
<keyword id="KW-0967">Endosome</keyword>
<keyword id="KW-0272">Extracellular matrix</keyword>
<keyword id="KW-0325">Glycoprotein</keyword>
<keyword id="KW-0345">HDL</keyword>
<keyword id="KW-0358">Heparin-binding</keyword>
<keyword id="KW-0445">Lipid transport</keyword>
<keyword id="KW-0446">Lipid-binding</keyword>
<keyword id="KW-0558">Oxidation</keyword>
<keyword id="KW-0597">Phosphoprotein</keyword>
<keyword id="KW-0677">Repeat</keyword>
<keyword id="KW-0964">Secreted</keyword>
<keyword id="KW-0732">Signal</keyword>
<keyword id="KW-0813">Transport</keyword>
<keyword id="KW-0850">VLDL</keyword>
<reference key="1">
    <citation type="submission" date="2019-03" db="EMBL/GenBank/DDBJ databases">
        <authorList>
            <person name="Johnson J."/>
            <person name="Muren E."/>
            <person name="Swofford R."/>
            <person name="Turner-Maier J."/>
            <person name="Marinescu V.D."/>
            <person name="Genereux D.P."/>
            <person name="Alfoldi J."/>
            <person name="Birren B."/>
            <person name="Karlsson E.K."/>
            <person name="Lindblad-Toh K."/>
        </authorList>
    </citation>
    <scope>NUCLEOTIDE SEQUENCE [LARGE SCALE GENOMIC DNA]</scope>
</reference>
<reference key="2">
    <citation type="unpublished observations" date="2021-01">
        <authorList>
            <person name="Puppione D.L."/>
        </authorList>
    </citation>
    <scope>IDENTIFICATION</scope>
</reference>
<protein>
    <recommendedName>
        <fullName>Apolipoprotein E</fullName>
        <shortName>Apo-E</shortName>
    </recommendedName>
</protein>
<proteinExistence type="inferred from homology"/>
<name>APOE_DICBI</name>
<gene>
    <name type="primary">APOE</name>
</gene>
<comment type="function">
    <text evidence="1">APOE is an apolipoprotein, a protein associating with lipid particles, that mainly functions in lipoprotein-mediated lipid transport between organs via the plasma and interstitial fluids. APOE is a core component of plasma lipoproteins and is involved in their production, conversion and clearance. Apolipoproteins are amphipathic molecules that interact both with lipids of the lipoprotein particle core and the aqueous environment of the plasma. As such, APOE associates with chylomicrons, chylomicron remnants, very low density lipoproteins (VLDL) and intermediate density lipoproteins (IDL) but shows a preferential binding to high-density lipoproteins (HDL). It also binds a wide range of cellular receptors including the LDL receptor/LDLR and the very low-density lipoprotein receptor/VLDLR that mediate the cellular uptake of the APOE-containing lipoprotein particles. Finally, APOE also has a heparin-binding activity and binds heparan-sulfate proteoglycans on the surface of cells, a property that supports the capture and the receptor-mediated uptake of APOE-containing lipoproteins by cells.</text>
</comment>
<comment type="subunit">
    <text evidence="1">Homotetramer. May interact with ABCA1; functionally associated with ABCA1 in the biogenesis of HDLs. May interact with APP/A4 amyloid-beta peptide; the interaction is extremely stable in vitro but its physiological significance is unclear. May interact with MAPT. May interact with MAP2. In the cerebrospinal fluid, interacts with secreted SORL1. Interacts with PMEL; this allows the loading of PMEL luminal fragment on ILVs to induce fibril nucleation.</text>
</comment>
<comment type="subcellular location">
    <subcellularLocation>
        <location evidence="1">Secreted</location>
    </subcellularLocation>
    <subcellularLocation>
        <location evidence="1">Secreted</location>
        <location evidence="1">Extracellular space</location>
    </subcellularLocation>
    <subcellularLocation>
        <location evidence="1">Secreted</location>
        <location evidence="1">Extracellular space</location>
        <location evidence="1">Extracellular matrix</location>
    </subcellularLocation>
    <subcellularLocation>
        <location evidence="1">Extracellular vesicle</location>
    </subcellularLocation>
    <subcellularLocation>
        <location evidence="1">Endosome</location>
        <location evidence="1">Multivesicular body</location>
    </subcellularLocation>
    <text evidence="1">In the plasma, APOE is associated with chylomicrons, chylomicrons remnants, VLDL, LDL and HDL lipoproteins. Lipid poor oligomeric APOE is associated with the extracellular matrix in a calcium- and heparan-sulfate proteoglycans-dependent manner. Lipidation induces the release from the extracellular matrix. Colocalizes with CD63 and PMEL at exosomes and in intraluminal vesicles within multivesicular endosomes.</text>
</comment>
<comment type="PTM">
    <text evidence="1">APOE exists as multiple glycosylated and sialylated glycoforms within cells and in plasma. The extent of glycosylation and sialylation are tissue and context specific.</text>
</comment>
<comment type="PTM">
    <text evidence="1">Glycated in plasma VLDL.</text>
</comment>
<comment type="PTM">
    <text evidence="1">Phosphorylated by FAM20C in the extracellular medium.</text>
</comment>
<comment type="similarity">
    <text evidence="3">Belongs to the apolipoprotein A1/A4/E family.</text>
</comment>
<feature type="signal peptide" evidence="2">
    <location>
        <begin position="1"/>
        <end position="18"/>
    </location>
</feature>
<feature type="chain" id="PRO_0000452454" description="Apolipoprotein E">
    <location>
        <begin position="19"/>
        <end position="316"/>
    </location>
</feature>
<feature type="repeat" description="1">
    <location>
        <begin position="83"/>
        <end position="104"/>
    </location>
</feature>
<feature type="repeat" description="2">
    <location>
        <begin position="105"/>
        <end position="126"/>
    </location>
</feature>
<feature type="repeat" description="3">
    <location>
        <begin position="127"/>
        <end position="148"/>
    </location>
</feature>
<feature type="repeat" description="4">
    <location>
        <begin position="149"/>
        <end position="170"/>
    </location>
</feature>
<feature type="repeat" description="5">
    <location>
        <begin position="171"/>
        <end position="192"/>
    </location>
</feature>
<feature type="repeat" description="6">
    <location>
        <begin position="193"/>
        <end position="214"/>
    </location>
</feature>
<feature type="repeat" description="7">
    <location>
        <begin position="215"/>
        <end position="232"/>
    </location>
</feature>
<feature type="repeat" description="8">
    <location>
        <begin position="233"/>
        <end position="254"/>
    </location>
</feature>
<feature type="region of interest" description="8 X 22 AA approximate tandem repeats">
    <location>
        <begin position="83"/>
        <end position="254"/>
    </location>
</feature>
<feature type="region of interest" description="LDL and other lipoprotein receptors binding" evidence="1">
    <location>
        <begin position="161"/>
        <end position="171"/>
    </location>
</feature>
<feature type="region of interest" description="Lipid-binding and lipoprotein association" evidence="1">
    <location>
        <begin position="213"/>
        <end position="289"/>
    </location>
</feature>
<feature type="region of interest" description="Homooligomerization" evidence="1">
    <location>
        <begin position="265"/>
        <end position="316"/>
    </location>
</feature>
<feature type="region of interest" description="Specificity for association with VLDL" evidence="1">
    <location>
        <begin position="277"/>
        <end position="289"/>
    </location>
</feature>
<feature type="binding site" evidence="1">
    <location>
        <begin position="165"/>
        <end position="168"/>
    </location>
    <ligand>
        <name>heparin</name>
        <dbReference type="ChEBI" id="CHEBI:28304"/>
    </ligand>
</feature>
<feature type="binding site" evidence="1">
    <location>
        <begin position="228"/>
        <end position="235"/>
    </location>
    <ligand>
        <name>heparin</name>
        <dbReference type="ChEBI" id="CHEBI:28304"/>
    </ligand>
</feature>
<evidence type="ECO:0000250" key="1">
    <source>
        <dbReference type="UniProtKB" id="P02649"/>
    </source>
</evidence>
<evidence type="ECO:0000255" key="2"/>
<evidence type="ECO:0000305" key="3"/>
<sequence length="316" mass="35672">MKVLWAALVVTLLAGCGADVEPGPEVQPGPEVQLGKEWATWQASQPWEQALGRFWNYLRWVQTLSEKVQEQLLSSQVTEELTALMDDTMKEVKACKSELEEQLGPVTEETKARVSKELQAAQARLGADMEEVRSRLAQYRGELQAMVGQSTEELRGRLSAHLRKLRKRLLRDAEDLQRRLAVYQAGIREGAARSVNTLREHLGPLAEQAATVHTLVSKPLQERAEAWAQRLRGRLEKAGFPVGDRLDEVREQVQEVRAKVEEQANQVRLQAEAFQGRLKSWFEPLVQDMQQKWAELVEKVQLAVGAVPTSVPSEKQ</sequence>
<organism>
    <name type="scientific">Diceros bicornis</name>
    <name type="common">Black rhinoceros</name>
    <dbReference type="NCBI Taxonomy" id="9805"/>
    <lineage>
        <taxon>Eukaryota</taxon>
        <taxon>Metazoa</taxon>
        <taxon>Chordata</taxon>
        <taxon>Craniata</taxon>
        <taxon>Vertebrata</taxon>
        <taxon>Euteleostomi</taxon>
        <taxon>Mammalia</taxon>
        <taxon>Eutheria</taxon>
        <taxon>Laurasiatheria</taxon>
        <taxon>Perissodactyla</taxon>
        <taxon>Rhinocerotidae</taxon>
        <taxon>Diceros</taxon>
    </lineage>
</organism>
<accession>P0DUI9</accession>